<organism>
    <name type="scientific">Schizosaccharomyces pombe (strain 972 / ATCC 24843)</name>
    <name type="common">Fission yeast</name>
    <dbReference type="NCBI Taxonomy" id="284812"/>
    <lineage>
        <taxon>Eukaryota</taxon>
        <taxon>Fungi</taxon>
        <taxon>Dikarya</taxon>
        <taxon>Ascomycota</taxon>
        <taxon>Taphrinomycotina</taxon>
        <taxon>Schizosaccharomycetes</taxon>
        <taxon>Schizosaccharomycetales</taxon>
        <taxon>Schizosaccharomycetaceae</taxon>
        <taxon>Schizosaccharomyces</taxon>
    </lineage>
</organism>
<dbReference type="EC" id="1.14.18.-"/>
<dbReference type="EMBL" id="CU329670">
    <property type="protein sequence ID" value="CAB10119.1"/>
    <property type="molecule type" value="Genomic_DNA"/>
</dbReference>
<dbReference type="PIR" id="T37995">
    <property type="entry name" value="T37995"/>
</dbReference>
<dbReference type="RefSeq" id="NP_594423.1">
    <property type="nucleotide sequence ID" value="NM_001019852.2"/>
</dbReference>
<dbReference type="SMR" id="O13846"/>
<dbReference type="BioGRID" id="278977">
    <property type="interactions" value="212"/>
</dbReference>
<dbReference type="FunCoup" id="O13846">
    <property type="interactions" value="128"/>
</dbReference>
<dbReference type="STRING" id="284812.O13846"/>
<dbReference type="iPTMnet" id="O13846"/>
<dbReference type="PaxDb" id="4896-SPAC19G12.08.1"/>
<dbReference type="EnsemblFungi" id="SPAC19G12.08.1">
    <property type="protein sequence ID" value="SPAC19G12.08.1:pep"/>
    <property type="gene ID" value="SPAC19G12.08"/>
</dbReference>
<dbReference type="GeneID" id="2542519"/>
<dbReference type="KEGG" id="spo:2542519"/>
<dbReference type="PomBase" id="SPAC19G12.08">
    <property type="gene designation" value="scs7"/>
</dbReference>
<dbReference type="VEuPathDB" id="FungiDB:SPAC19G12.08"/>
<dbReference type="eggNOG" id="KOG0539">
    <property type="taxonomic scope" value="Eukaryota"/>
</dbReference>
<dbReference type="HOGENOM" id="CLU_034756_0_1_1"/>
<dbReference type="InParanoid" id="O13846"/>
<dbReference type="OMA" id="HFVHHDQ"/>
<dbReference type="PhylomeDB" id="O13846"/>
<dbReference type="Reactome" id="R-SPO-1660661">
    <property type="pathway name" value="Sphingolipid de novo biosynthesis"/>
</dbReference>
<dbReference type="PRO" id="PR:O13846"/>
<dbReference type="Proteomes" id="UP000002485">
    <property type="component" value="Chromosome I"/>
</dbReference>
<dbReference type="GO" id="GO:0005783">
    <property type="term" value="C:endoplasmic reticulum"/>
    <property type="evidence" value="ECO:0007005"/>
    <property type="project" value="PomBase"/>
</dbReference>
<dbReference type="GO" id="GO:0005789">
    <property type="term" value="C:endoplasmic reticulum membrane"/>
    <property type="evidence" value="ECO:0000305"/>
    <property type="project" value="PomBase"/>
</dbReference>
<dbReference type="GO" id="GO:0080132">
    <property type="term" value="F:fatty acid 2-hydroxylase activity"/>
    <property type="evidence" value="ECO:0000318"/>
    <property type="project" value="GO_Central"/>
</dbReference>
<dbReference type="GO" id="GO:0005506">
    <property type="term" value="F:iron ion binding"/>
    <property type="evidence" value="ECO:0007669"/>
    <property type="project" value="InterPro"/>
</dbReference>
<dbReference type="GO" id="GO:0006633">
    <property type="term" value="P:fatty acid biosynthetic process"/>
    <property type="evidence" value="ECO:0007669"/>
    <property type="project" value="UniProtKB-KW"/>
</dbReference>
<dbReference type="GO" id="GO:0006631">
    <property type="term" value="P:fatty acid metabolic process"/>
    <property type="evidence" value="ECO:0000318"/>
    <property type="project" value="GO_Central"/>
</dbReference>
<dbReference type="GO" id="GO:0051999">
    <property type="term" value="P:mannosyl-inositol phosphorylceramide biosynthetic process"/>
    <property type="evidence" value="ECO:0000315"/>
    <property type="project" value="PomBase"/>
</dbReference>
<dbReference type="GO" id="GO:0006675">
    <property type="term" value="P:mannosyl-inositol phosphorylceramide metabolic process"/>
    <property type="evidence" value="ECO:0000315"/>
    <property type="project" value="PomBase"/>
</dbReference>
<dbReference type="InterPro" id="IPR006694">
    <property type="entry name" value="Fatty_acid_hydroxylase"/>
</dbReference>
<dbReference type="InterPro" id="IPR014430">
    <property type="entry name" value="Scs7"/>
</dbReference>
<dbReference type="PANTHER" id="PTHR12863:SF1">
    <property type="entry name" value="FATTY ACID 2-HYDROXYLASE"/>
    <property type="match status" value="1"/>
</dbReference>
<dbReference type="PANTHER" id="PTHR12863">
    <property type="entry name" value="FATTY ACID HYDROXYLASE"/>
    <property type="match status" value="1"/>
</dbReference>
<dbReference type="Pfam" id="PF04116">
    <property type="entry name" value="FA_hydroxylase"/>
    <property type="match status" value="1"/>
</dbReference>
<dbReference type="PIRSF" id="PIRSF005149">
    <property type="entry name" value="IPC-B_HD"/>
    <property type="match status" value="1"/>
</dbReference>
<keyword id="KW-0249">Electron transport</keyword>
<keyword id="KW-0256">Endoplasmic reticulum</keyword>
<keyword id="KW-0275">Fatty acid biosynthesis</keyword>
<keyword id="KW-0276">Fatty acid metabolism</keyword>
<keyword id="KW-0349">Heme</keyword>
<keyword id="KW-0408">Iron</keyword>
<keyword id="KW-0444">Lipid biosynthesis</keyword>
<keyword id="KW-0443">Lipid metabolism</keyword>
<keyword id="KW-0472">Membrane</keyword>
<keyword id="KW-0479">Metal-binding</keyword>
<keyword id="KW-0560">Oxidoreductase</keyword>
<keyword id="KW-1185">Reference proteome</keyword>
<keyword id="KW-0812">Transmembrane</keyword>
<keyword id="KW-1133">Transmembrane helix</keyword>
<keyword id="KW-0813">Transport</keyword>
<keyword id="KW-0862">Zinc</keyword>
<proteinExistence type="inferred from homology"/>
<feature type="chain" id="PRO_0000362158" description="Ceramide very long chain fatty acid hydroxylase scs7">
    <location>
        <begin position="1"/>
        <end position="347"/>
    </location>
</feature>
<feature type="topological domain" description="Cytoplasmic" evidence="1">
    <location>
        <begin position="1"/>
        <end position="156"/>
    </location>
</feature>
<feature type="transmembrane region" description="Helical" evidence="3">
    <location>
        <begin position="157"/>
        <end position="177"/>
    </location>
</feature>
<feature type="topological domain" description="Lumenal" evidence="1">
    <location>
        <position position="178"/>
    </location>
</feature>
<feature type="transmembrane region" description="Helical" evidence="3">
    <location>
        <begin position="179"/>
        <end position="199"/>
    </location>
</feature>
<feature type="topological domain" description="Cytoplasmic" evidence="1">
    <location>
        <begin position="200"/>
        <end position="238"/>
    </location>
</feature>
<feature type="transmembrane region" description="Helical" evidence="3">
    <location>
        <begin position="239"/>
        <end position="259"/>
    </location>
</feature>
<feature type="topological domain" description="Lumenal" evidence="1">
    <location>
        <position position="260"/>
    </location>
</feature>
<feature type="transmembrane region" description="Helical" evidence="3">
    <location>
        <begin position="261"/>
        <end position="281"/>
    </location>
</feature>
<feature type="topological domain" description="Cytoplasmic" evidence="1">
    <location>
        <begin position="282"/>
        <end position="347"/>
    </location>
</feature>
<feature type="binding site" evidence="2">
    <location>
        <position position="204"/>
    </location>
    <ligand>
        <name>Zn(2+)</name>
        <dbReference type="ChEBI" id="CHEBI:29105"/>
        <label>1</label>
    </ligand>
</feature>
<feature type="binding site" evidence="2">
    <location>
        <position position="209"/>
    </location>
    <ligand>
        <name>Zn(2+)</name>
        <dbReference type="ChEBI" id="CHEBI:29105"/>
        <label>1</label>
    </ligand>
</feature>
<feature type="binding site" evidence="2">
    <location>
        <position position="228"/>
    </location>
    <ligand>
        <name>Zn(2+)</name>
        <dbReference type="ChEBI" id="CHEBI:29105"/>
        <label>1</label>
    </ligand>
</feature>
<feature type="binding site" evidence="2">
    <location>
        <position position="231"/>
    </location>
    <ligand>
        <name>Zn(2+)</name>
        <dbReference type="ChEBI" id="CHEBI:29105"/>
        <label>2</label>
    </ligand>
</feature>
<feature type="binding site" evidence="2">
    <location>
        <position position="232"/>
    </location>
    <ligand>
        <name>Zn(2+)</name>
        <dbReference type="ChEBI" id="CHEBI:29105"/>
        <label>1</label>
    </ligand>
</feature>
<feature type="binding site" evidence="2">
    <location>
        <position position="286"/>
    </location>
    <ligand>
        <name>Zn(2+)</name>
        <dbReference type="ChEBI" id="CHEBI:29105"/>
        <label>2</label>
    </ligand>
</feature>
<feature type="binding site" evidence="2">
    <location>
        <position position="290"/>
    </location>
    <ligand>
        <name>Zn(2+)</name>
        <dbReference type="ChEBI" id="CHEBI:29105"/>
        <label>2</label>
    </ligand>
</feature>
<feature type="binding site" evidence="2">
    <location>
        <position position="306"/>
    </location>
    <ligand>
        <name>Zn(2+)</name>
        <dbReference type="ChEBI" id="CHEBI:29105"/>
        <label>2</label>
    </ligand>
</feature>
<feature type="binding site" evidence="2">
    <location>
        <position position="309"/>
    </location>
    <ligand>
        <name>Zn(2+)</name>
        <dbReference type="ChEBI" id="CHEBI:29105"/>
        <label>1</label>
    </ligand>
</feature>
<feature type="binding site" evidence="2">
    <location>
        <position position="310"/>
    </location>
    <ligand>
        <name>Zn(2+)</name>
        <dbReference type="ChEBI" id="CHEBI:29105"/>
        <label>2</label>
    </ligand>
</feature>
<comment type="function">
    <text evidence="2">Ceramide hydroxylase involved in the hydroxylation of sphingolipid-associated very long chain fatty acids. Postulated to hydroxylate the very long chain fatty acid of dihydroceramides and phytoceramides at C-2.</text>
</comment>
<comment type="cofactor">
    <cofactor evidence="2">
        <name>Zn(2+)</name>
        <dbReference type="ChEBI" id="CHEBI:29105"/>
    </cofactor>
    <text evidence="2">Binds 2 Zn(2+) ions per subunit that likely form a catalytic dimetal center.</text>
</comment>
<comment type="pathway">
    <text evidence="2">Sphingolipid metabolism.</text>
</comment>
<comment type="subcellular location">
    <subcellularLocation>
        <location evidence="4">Endoplasmic reticulum membrane</location>
        <topology evidence="4">Multi-pass membrane protein</topology>
    </subcellularLocation>
</comment>
<comment type="similarity">
    <text evidence="5">Belongs to the sterol desaturase family. SCS7 subfamily.</text>
</comment>
<comment type="caution">
    <text evidence="5">Lacks the conserved N-terminal cytochrome b5 heme-binding domain. Its enzyme activity is therefore unsure.</text>
</comment>
<reference key="1">
    <citation type="journal article" date="2002" name="Nature">
        <title>The genome sequence of Schizosaccharomyces pombe.</title>
        <authorList>
            <person name="Wood V."/>
            <person name="Gwilliam R."/>
            <person name="Rajandream M.A."/>
            <person name="Lyne M.H."/>
            <person name="Lyne R."/>
            <person name="Stewart A."/>
            <person name="Sgouros J.G."/>
            <person name="Peat N."/>
            <person name="Hayles J."/>
            <person name="Baker S.G."/>
            <person name="Basham D."/>
            <person name="Bowman S."/>
            <person name="Brooks K."/>
            <person name="Brown D."/>
            <person name="Brown S."/>
            <person name="Chillingworth T."/>
            <person name="Churcher C.M."/>
            <person name="Collins M."/>
            <person name="Connor R."/>
            <person name="Cronin A."/>
            <person name="Davis P."/>
            <person name="Feltwell T."/>
            <person name="Fraser A."/>
            <person name="Gentles S."/>
            <person name="Goble A."/>
            <person name="Hamlin N."/>
            <person name="Harris D.E."/>
            <person name="Hidalgo J."/>
            <person name="Hodgson G."/>
            <person name="Holroyd S."/>
            <person name="Hornsby T."/>
            <person name="Howarth S."/>
            <person name="Huckle E.J."/>
            <person name="Hunt S."/>
            <person name="Jagels K."/>
            <person name="James K.D."/>
            <person name="Jones L."/>
            <person name="Jones M."/>
            <person name="Leather S."/>
            <person name="McDonald S."/>
            <person name="McLean J."/>
            <person name="Mooney P."/>
            <person name="Moule S."/>
            <person name="Mungall K.L."/>
            <person name="Murphy L.D."/>
            <person name="Niblett D."/>
            <person name="Odell C."/>
            <person name="Oliver K."/>
            <person name="O'Neil S."/>
            <person name="Pearson D."/>
            <person name="Quail M.A."/>
            <person name="Rabbinowitsch E."/>
            <person name="Rutherford K.M."/>
            <person name="Rutter S."/>
            <person name="Saunders D."/>
            <person name="Seeger K."/>
            <person name="Sharp S."/>
            <person name="Skelton J."/>
            <person name="Simmonds M.N."/>
            <person name="Squares R."/>
            <person name="Squares S."/>
            <person name="Stevens K."/>
            <person name="Taylor K."/>
            <person name="Taylor R.G."/>
            <person name="Tivey A."/>
            <person name="Walsh S.V."/>
            <person name="Warren T."/>
            <person name="Whitehead S."/>
            <person name="Woodward J.R."/>
            <person name="Volckaert G."/>
            <person name="Aert R."/>
            <person name="Robben J."/>
            <person name="Grymonprez B."/>
            <person name="Weltjens I."/>
            <person name="Vanstreels E."/>
            <person name="Rieger M."/>
            <person name="Schaefer M."/>
            <person name="Mueller-Auer S."/>
            <person name="Gabel C."/>
            <person name="Fuchs M."/>
            <person name="Duesterhoeft A."/>
            <person name="Fritzc C."/>
            <person name="Holzer E."/>
            <person name="Moestl D."/>
            <person name="Hilbert H."/>
            <person name="Borzym K."/>
            <person name="Langer I."/>
            <person name="Beck A."/>
            <person name="Lehrach H."/>
            <person name="Reinhardt R."/>
            <person name="Pohl T.M."/>
            <person name="Eger P."/>
            <person name="Zimmermann W."/>
            <person name="Wedler H."/>
            <person name="Wambutt R."/>
            <person name="Purnelle B."/>
            <person name="Goffeau A."/>
            <person name="Cadieu E."/>
            <person name="Dreano S."/>
            <person name="Gloux S."/>
            <person name="Lelaure V."/>
            <person name="Mottier S."/>
            <person name="Galibert F."/>
            <person name="Aves S.J."/>
            <person name="Xiang Z."/>
            <person name="Hunt C."/>
            <person name="Moore K."/>
            <person name="Hurst S.M."/>
            <person name="Lucas M."/>
            <person name="Rochet M."/>
            <person name="Gaillardin C."/>
            <person name="Tallada V.A."/>
            <person name="Garzon A."/>
            <person name="Thode G."/>
            <person name="Daga R.R."/>
            <person name="Cruzado L."/>
            <person name="Jimenez J."/>
            <person name="Sanchez M."/>
            <person name="del Rey F."/>
            <person name="Benito J."/>
            <person name="Dominguez A."/>
            <person name="Revuelta J.L."/>
            <person name="Moreno S."/>
            <person name="Armstrong J."/>
            <person name="Forsburg S.L."/>
            <person name="Cerutti L."/>
            <person name="Lowe T."/>
            <person name="McCombie W.R."/>
            <person name="Paulsen I."/>
            <person name="Potashkin J."/>
            <person name="Shpakovski G.V."/>
            <person name="Ussery D."/>
            <person name="Barrell B.G."/>
            <person name="Nurse P."/>
        </authorList>
    </citation>
    <scope>NUCLEOTIDE SEQUENCE [LARGE SCALE GENOMIC DNA]</scope>
    <source>
        <strain>972 / ATCC 24843</strain>
    </source>
</reference>
<reference key="2">
    <citation type="journal article" date="2006" name="Nat. Biotechnol.">
        <title>ORFeome cloning and global analysis of protein localization in the fission yeast Schizosaccharomyces pombe.</title>
        <authorList>
            <person name="Matsuyama A."/>
            <person name="Arai R."/>
            <person name="Yashiroda Y."/>
            <person name="Shirai A."/>
            <person name="Kamata A."/>
            <person name="Sekido S."/>
            <person name="Kobayashi Y."/>
            <person name="Hashimoto A."/>
            <person name="Hamamoto M."/>
            <person name="Hiraoka Y."/>
            <person name="Horinouchi S."/>
            <person name="Yoshida M."/>
        </authorList>
    </citation>
    <scope>SUBCELLULAR LOCATION [LARGE SCALE ANALYSIS]</scope>
</reference>
<name>SCS7_SCHPO</name>
<accession>O13846</accession>
<sequence length="347" mass="40229">MASVTSEKCVILSDGTEYDVTNYLVANKDAADLLRRYHRQEVADILNATSKSKHSEAVVEILKSAKVPLKNKEFSDLVDQNIGVGYGNEFIVKPTDLDKDFEKNHFLDLKKPLLPQILFGNIKKDVYLDQVHRPRHYRGSGSAPLFGNFLEPLTKTPWYMIPLIWVPCVTYGFLYACTGIPFSVAITFFIIGLFTWTLVEYTMHRFLFHLDEYTPDHPIFLTMHFAFHGCHHFLPADKYRLVMPPALFLIFATPWYHFIQLVLPHYIGVAGFSGAILGYVFYDLTHYFLHHRRMPNAYLTDLKTWHLDHHYKDYKSAYGITSWFWDRVFGTEGPLFNEQGKISTKAK</sequence>
<evidence type="ECO:0000250" key="1"/>
<evidence type="ECO:0000250" key="2">
    <source>
        <dbReference type="UniProtKB" id="Q03529"/>
    </source>
</evidence>
<evidence type="ECO:0000255" key="3"/>
<evidence type="ECO:0000269" key="4">
    <source>
    </source>
</evidence>
<evidence type="ECO:0000305" key="5"/>
<evidence type="ECO:0000312" key="6">
    <source>
        <dbReference type="PomBase" id="SPAC19G12.08"/>
    </source>
</evidence>
<gene>
    <name evidence="6" type="primary">scs7</name>
    <name type="ORF">SPAC19G12.08</name>
</gene>
<protein>
    <recommendedName>
        <fullName>Ceramide very long chain fatty acid hydroxylase scs7</fullName>
        <shortName>Ceramide VLCFA hydroxylase scs7</shortName>
        <ecNumber>1.14.18.-</ecNumber>
    </recommendedName>
</protein>